<dbReference type="EC" id="6.3.5.-" evidence="1"/>
<dbReference type="EMBL" id="CP000529">
    <property type="protein sequence ID" value="ABM35497.1"/>
    <property type="molecule type" value="Genomic_DNA"/>
</dbReference>
<dbReference type="RefSeq" id="WP_011799607.1">
    <property type="nucleotide sequence ID" value="NC_008781.1"/>
</dbReference>
<dbReference type="SMR" id="A1VIL9"/>
<dbReference type="STRING" id="365044.Pnap_0172"/>
<dbReference type="KEGG" id="pna:Pnap_0172"/>
<dbReference type="eggNOG" id="COG0721">
    <property type="taxonomic scope" value="Bacteria"/>
</dbReference>
<dbReference type="HOGENOM" id="CLU_105899_2_2_4"/>
<dbReference type="OrthoDB" id="9794326at2"/>
<dbReference type="Proteomes" id="UP000000644">
    <property type="component" value="Chromosome"/>
</dbReference>
<dbReference type="GO" id="GO:0050566">
    <property type="term" value="F:asparaginyl-tRNA synthase (glutamine-hydrolyzing) activity"/>
    <property type="evidence" value="ECO:0007669"/>
    <property type="project" value="RHEA"/>
</dbReference>
<dbReference type="GO" id="GO:0005524">
    <property type="term" value="F:ATP binding"/>
    <property type="evidence" value="ECO:0007669"/>
    <property type="project" value="UniProtKB-KW"/>
</dbReference>
<dbReference type="GO" id="GO:0050567">
    <property type="term" value="F:glutaminyl-tRNA synthase (glutamine-hydrolyzing) activity"/>
    <property type="evidence" value="ECO:0007669"/>
    <property type="project" value="UniProtKB-UniRule"/>
</dbReference>
<dbReference type="GO" id="GO:0070681">
    <property type="term" value="P:glutaminyl-tRNAGln biosynthesis via transamidation"/>
    <property type="evidence" value="ECO:0007669"/>
    <property type="project" value="TreeGrafter"/>
</dbReference>
<dbReference type="GO" id="GO:0006450">
    <property type="term" value="P:regulation of translational fidelity"/>
    <property type="evidence" value="ECO:0007669"/>
    <property type="project" value="InterPro"/>
</dbReference>
<dbReference type="GO" id="GO:0006412">
    <property type="term" value="P:translation"/>
    <property type="evidence" value="ECO:0007669"/>
    <property type="project" value="UniProtKB-UniRule"/>
</dbReference>
<dbReference type="Gene3D" id="1.10.20.60">
    <property type="entry name" value="Glu-tRNAGln amidotransferase C subunit, N-terminal domain"/>
    <property type="match status" value="1"/>
</dbReference>
<dbReference type="HAMAP" id="MF_00122">
    <property type="entry name" value="GatC"/>
    <property type="match status" value="1"/>
</dbReference>
<dbReference type="InterPro" id="IPR036113">
    <property type="entry name" value="Asp/Glu-ADT_sf_sub_c"/>
</dbReference>
<dbReference type="InterPro" id="IPR003837">
    <property type="entry name" value="GatC"/>
</dbReference>
<dbReference type="NCBIfam" id="TIGR00135">
    <property type="entry name" value="gatC"/>
    <property type="match status" value="1"/>
</dbReference>
<dbReference type="PANTHER" id="PTHR15004">
    <property type="entry name" value="GLUTAMYL-TRNA(GLN) AMIDOTRANSFERASE SUBUNIT C, MITOCHONDRIAL"/>
    <property type="match status" value="1"/>
</dbReference>
<dbReference type="PANTHER" id="PTHR15004:SF0">
    <property type="entry name" value="GLUTAMYL-TRNA(GLN) AMIDOTRANSFERASE SUBUNIT C, MITOCHONDRIAL"/>
    <property type="match status" value="1"/>
</dbReference>
<dbReference type="Pfam" id="PF02686">
    <property type="entry name" value="GatC"/>
    <property type="match status" value="1"/>
</dbReference>
<dbReference type="SUPFAM" id="SSF141000">
    <property type="entry name" value="Glu-tRNAGln amidotransferase C subunit"/>
    <property type="match status" value="1"/>
</dbReference>
<organism>
    <name type="scientific">Polaromonas naphthalenivorans (strain CJ2)</name>
    <dbReference type="NCBI Taxonomy" id="365044"/>
    <lineage>
        <taxon>Bacteria</taxon>
        <taxon>Pseudomonadati</taxon>
        <taxon>Pseudomonadota</taxon>
        <taxon>Betaproteobacteria</taxon>
        <taxon>Burkholderiales</taxon>
        <taxon>Comamonadaceae</taxon>
        <taxon>Polaromonas</taxon>
    </lineage>
</organism>
<sequence length="99" mass="10875">MALTFKDIERVANLARLELRPDETEHTLSQLNGFFALVEQMQAVNTDGVEPLAHPAALLGEVALRLREDIASEPNQREASQASAPAVERGLFLVPKVIE</sequence>
<gene>
    <name evidence="1" type="primary">gatC</name>
    <name type="ordered locus">Pnap_0172</name>
</gene>
<protein>
    <recommendedName>
        <fullName evidence="1">Aspartyl/glutamyl-tRNA(Asn/Gln) amidotransferase subunit C</fullName>
        <shortName evidence="1">Asp/Glu-ADT subunit C</shortName>
        <ecNumber evidence="1">6.3.5.-</ecNumber>
    </recommendedName>
</protein>
<comment type="function">
    <text evidence="1">Allows the formation of correctly charged Asn-tRNA(Asn) or Gln-tRNA(Gln) through the transamidation of misacylated Asp-tRNA(Asn) or Glu-tRNA(Gln) in organisms which lack either or both of asparaginyl-tRNA or glutaminyl-tRNA synthetases. The reaction takes place in the presence of glutamine and ATP through an activated phospho-Asp-tRNA(Asn) or phospho-Glu-tRNA(Gln).</text>
</comment>
<comment type="catalytic activity">
    <reaction evidence="1">
        <text>L-glutamyl-tRNA(Gln) + L-glutamine + ATP + H2O = L-glutaminyl-tRNA(Gln) + L-glutamate + ADP + phosphate + H(+)</text>
        <dbReference type="Rhea" id="RHEA:17521"/>
        <dbReference type="Rhea" id="RHEA-COMP:9681"/>
        <dbReference type="Rhea" id="RHEA-COMP:9684"/>
        <dbReference type="ChEBI" id="CHEBI:15377"/>
        <dbReference type="ChEBI" id="CHEBI:15378"/>
        <dbReference type="ChEBI" id="CHEBI:29985"/>
        <dbReference type="ChEBI" id="CHEBI:30616"/>
        <dbReference type="ChEBI" id="CHEBI:43474"/>
        <dbReference type="ChEBI" id="CHEBI:58359"/>
        <dbReference type="ChEBI" id="CHEBI:78520"/>
        <dbReference type="ChEBI" id="CHEBI:78521"/>
        <dbReference type="ChEBI" id="CHEBI:456216"/>
    </reaction>
</comment>
<comment type="catalytic activity">
    <reaction evidence="1">
        <text>L-aspartyl-tRNA(Asn) + L-glutamine + ATP + H2O = L-asparaginyl-tRNA(Asn) + L-glutamate + ADP + phosphate + 2 H(+)</text>
        <dbReference type="Rhea" id="RHEA:14513"/>
        <dbReference type="Rhea" id="RHEA-COMP:9674"/>
        <dbReference type="Rhea" id="RHEA-COMP:9677"/>
        <dbReference type="ChEBI" id="CHEBI:15377"/>
        <dbReference type="ChEBI" id="CHEBI:15378"/>
        <dbReference type="ChEBI" id="CHEBI:29985"/>
        <dbReference type="ChEBI" id="CHEBI:30616"/>
        <dbReference type="ChEBI" id="CHEBI:43474"/>
        <dbReference type="ChEBI" id="CHEBI:58359"/>
        <dbReference type="ChEBI" id="CHEBI:78515"/>
        <dbReference type="ChEBI" id="CHEBI:78516"/>
        <dbReference type="ChEBI" id="CHEBI:456216"/>
    </reaction>
</comment>
<comment type="subunit">
    <text evidence="1">Heterotrimer of A, B and C subunits.</text>
</comment>
<comment type="similarity">
    <text evidence="1">Belongs to the GatC family.</text>
</comment>
<accession>A1VIL9</accession>
<evidence type="ECO:0000255" key="1">
    <source>
        <dbReference type="HAMAP-Rule" id="MF_00122"/>
    </source>
</evidence>
<keyword id="KW-0067">ATP-binding</keyword>
<keyword id="KW-0436">Ligase</keyword>
<keyword id="KW-0547">Nucleotide-binding</keyword>
<keyword id="KW-0648">Protein biosynthesis</keyword>
<keyword id="KW-1185">Reference proteome</keyword>
<feature type="chain" id="PRO_1000016169" description="Aspartyl/glutamyl-tRNA(Asn/Gln) amidotransferase subunit C">
    <location>
        <begin position="1"/>
        <end position="99"/>
    </location>
</feature>
<proteinExistence type="inferred from homology"/>
<reference key="1">
    <citation type="journal article" date="2009" name="Environ. Microbiol.">
        <title>The genome of Polaromonas naphthalenivorans strain CJ2, isolated from coal tar-contaminated sediment, reveals physiological and metabolic versatility and evolution through extensive horizontal gene transfer.</title>
        <authorList>
            <person name="Yagi J.M."/>
            <person name="Sims D."/>
            <person name="Brettin T."/>
            <person name="Bruce D."/>
            <person name="Madsen E.L."/>
        </authorList>
    </citation>
    <scope>NUCLEOTIDE SEQUENCE [LARGE SCALE GENOMIC DNA]</scope>
    <source>
        <strain>CJ2</strain>
    </source>
</reference>
<name>GATC_POLNA</name>